<gene>
    <name evidence="1" type="primary">mdtL</name>
    <name type="ordered locus">SbBS512_E4212</name>
</gene>
<proteinExistence type="inferred from homology"/>
<dbReference type="EMBL" id="CP001063">
    <property type="protein sequence ID" value="ACD08901.1"/>
    <property type="molecule type" value="Genomic_DNA"/>
</dbReference>
<dbReference type="RefSeq" id="WP_000085987.1">
    <property type="nucleotide sequence ID" value="NC_010658.1"/>
</dbReference>
<dbReference type="SMR" id="B2TUR5"/>
<dbReference type="STRING" id="344609.SbBS512_E4212"/>
<dbReference type="GeneID" id="93778451"/>
<dbReference type="KEGG" id="sbc:SbBS512_E4212"/>
<dbReference type="HOGENOM" id="CLU_001265_47_1_6"/>
<dbReference type="Proteomes" id="UP000001030">
    <property type="component" value="Chromosome"/>
</dbReference>
<dbReference type="GO" id="GO:0005886">
    <property type="term" value="C:plasma membrane"/>
    <property type="evidence" value="ECO:0007669"/>
    <property type="project" value="UniProtKB-SubCell"/>
</dbReference>
<dbReference type="GO" id="GO:0022857">
    <property type="term" value="F:transmembrane transporter activity"/>
    <property type="evidence" value="ECO:0007669"/>
    <property type="project" value="UniProtKB-UniRule"/>
</dbReference>
<dbReference type="CDD" id="cd17320">
    <property type="entry name" value="MFS_MdfA_MDR_like"/>
    <property type="match status" value="1"/>
</dbReference>
<dbReference type="FunFam" id="1.20.1720.10:FF:000003">
    <property type="entry name" value="Multidrug resistance protein MdtL"/>
    <property type="match status" value="1"/>
</dbReference>
<dbReference type="Gene3D" id="1.20.1720.10">
    <property type="entry name" value="Multidrug resistance protein D"/>
    <property type="match status" value="1"/>
</dbReference>
<dbReference type="HAMAP" id="MF_01530">
    <property type="entry name" value="MFS_MdtL"/>
    <property type="match status" value="1"/>
</dbReference>
<dbReference type="InterPro" id="IPR011701">
    <property type="entry name" value="MFS"/>
</dbReference>
<dbReference type="InterPro" id="IPR020846">
    <property type="entry name" value="MFS_dom"/>
</dbReference>
<dbReference type="InterPro" id="IPR050189">
    <property type="entry name" value="MFS_Efflux_Transporters"/>
</dbReference>
<dbReference type="InterPro" id="IPR036259">
    <property type="entry name" value="MFS_trans_sf"/>
</dbReference>
<dbReference type="InterPro" id="IPR023697">
    <property type="entry name" value="Multidrug-R_MdtL"/>
</dbReference>
<dbReference type="NCBIfam" id="NF007782">
    <property type="entry name" value="PRK10473.1"/>
    <property type="match status" value="1"/>
</dbReference>
<dbReference type="PANTHER" id="PTHR43124:SF3">
    <property type="entry name" value="CHLORAMPHENICOL EFFLUX PUMP RV0191"/>
    <property type="match status" value="1"/>
</dbReference>
<dbReference type="PANTHER" id="PTHR43124">
    <property type="entry name" value="PURINE EFFLUX PUMP PBUE"/>
    <property type="match status" value="1"/>
</dbReference>
<dbReference type="Pfam" id="PF07690">
    <property type="entry name" value="MFS_1"/>
    <property type="match status" value="1"/>
</dbReference>
<dbReference type="SUPFAM" id="SSF103473">
    <property type="entry name" value="MFS general substrate transporter"/>
    <property type="match status" value="1"/>
</dbReference>
<dbReference type="PROSITE" id="PS50850">
    <property type="entry name" value="MFS"/>
    <property type="match status" value="1"/>
</dbReference>
<sequence length="391" mass="41506">MSRFLICSFALVLLYPAGIDMYLVGLPRIAADLNASEAQLHIAFSVYLAGMAAAMLFAGKVADRSGRKPVAIPGAALFIIASVFCSLAETSTLFLAGRFLQGLGAGCCYVVAFAILRDTLDDRRRAKVLSLLNGITCIIPVLAPVLGHLIMLKFPWQSLFWAMAMMGIAVLMLSLFILKETRPASPAASDKPRENSESLLNRFFLSRVVITTLSVSVILTFVNTSPVLLMEIMGFERGEYATIMALTAGVSMTVSFSTPFALGIFKPRTLMITSQVLFLAAGITLAVSPSHAVSLFGITLICAGFSVGFGVAMSQALGPFSLRAGVASSTLGIAQVCGSSLWIWLAAVVGIGAWNMLIGILIACSIVSLLLIMFVAPGRPVAAHEEIHHHA</sequence>
<reference key="1">
    <citation type="submission" date="2008-05" db="EMBL/GenBank/DDBJ databases">
        <title>Complete sequence of Shigella boydii serotype 18 strain BS512.</title>
        <authorList>
            <person name="Rasko D.A."/>
            <person name="Rosovitz M."/>
            <person name="Maurelli A.T."/>
            <person name="Myers G."/>
            <person name="Seshadri R."/>
            <person name="Cer R."/>
            <person name="Jiang L."/>
            <person name="Ravel J."/>
            <person name="Sebastian Y."/>
        </authorList>
    </citation>
    <scope>NUCLEOTIDE SEQUENCE [LARGE SCALE GENOMIC DNA]</scope>
    <source>
        <strain>CDC 3083-94 / BS512</strain>
    </source>
</reference>
<keyword id="KW-0997">Cell inner membrane</keyword>
<keyword id="KW-1003">Cell membrane</keyword>
<keyword id="KW-0472">Membrane</keyword>
<keyword id="KW-1185">Reference proteome</keyword>
<keyword id="KW-0812">Transmembrane</keyword>
<keyword id="KW-1133">Transmembrane helix</keyword>
<keyword id="KW-0813">Transport</keyword>
<evidence type="ECO:0000255" key="1">
    <source>
        <dbReference type="HAMAP-Rule" id="MF_01530"/>
    </source>
</evidence>
<organism>
    <name type="scientific">Shigella boydii serotype 18 (strain CDC 3083-94 / BS512)</name>
    <dbReference type="NCBI Taxonomy" id="344609"/>
    <lineage>
        <taxon>Bacteria</taxon>
        <taxon>Pseudomonadati</taxon>
        <taxon>Pseudomonadota</taxon>
        <taxon>Gammaproteobacteria</taxon>
        <taxon>Enterobacterales</taxon>
        <taxon>Enterobacteriaceae</taxon>
        <taxon>Shigella</taxon>
    </lineage>
</organism>
<name>MDTL_SHIB3</name>
<feature type="chain" id="PRO_1000200833" description="Multidrug resistance protein MdtL">
    <location>
        <begin position="1"/>
        <end position="391"/>
    </location>
</feature>
<feature type="transmembrane region" description="Helical" evidence="1">
    <location>
        <begin position="4"/>
        <end position="24"/>
    </location>
</feature>
<feature type="transmembrane region" description="Helical" evidence="1">
    <location>
        <begin position="42"/>
        <end position="62"/>
    </location>
</feature>
<feature type="transmembrane region" description="Helical" evidence="1">
    <location>
        <begin position="69"/>
        <end position="89"/>
    </location>
</feature>
<feature type="transmembrane region" description="Helical" evidence="1">
    <location>
        <begin position="93"/>
        <end position="113"/>
    </location>
</feature>
<feature type="transmembrane region" description="Helical" evidence="1">
    <location>
        <begin position="131"/>
        <end position="151"/>
    </location>
</feature>
<feature type="transmembrane region" description="Helical" evidence="1">
    <location>
        <begin position="158"/>
        <end position="178"/>
    </location>
</feature>
<feature type="transmembrane region" description="Helical" evidence="1">
    <location>
        <begin position="203"/>
        <end position="222"/>
    </location>
</feature>
<feature type="transmembrane region" description="Helical" evidence="1">
    <location>
        <begin position="245"/>
        <end position="265"/>
    </location>
</feature>
<feature type="transmembrane region" description="Helical" evidence="1">
    <location>
        <begin position="269"/>
        <end position="289"/>
    </location>
</feature>
<feature type="transmembrane region" description="Helical" evidence="1">
    <location>
        <begin position="293"/>
        <end position="313"/>
    </location>
</feature>
<feature type="transmembrane region" description="Helical" evidence="1">
    <location>
        <begin position="331"/>
        <end position="351"/>
    </location>
</feature>
<feature type="transmembrane region" description="Helical" evidence="1">
    <location>
        <begin position="356"/>
        <end position="376"/>
    </location>
</feature>
<comment type="subcellular location">
    <subcellularLocation>
        <location evidence="1">Cell inner membrane</location>
        <topology evidence="1">Multi-pass membrane protein</topology>
    </subcellularLocation>
</comment>
<comment type="similarity">
    <text evidence="1">Belongs to the major facilitator superfamily. DHA1 family. MdtL (TC 2.A.1.2.22) subfamily.</text>
</comment>
<accession>B2TUR5</accession>
<protein>
    <recommendedName>
        <fullName evidence="1">Multidrug resistance protein MdtL</fullName>
    </recommendedName>
</protein>